<reference key="1">
    <citation type="journal article" date="2008" name="Proc. Natl. Acad. Sci. U.S.A.">
        <title>Complete genome of the uncultured termite group 1 bacteria in a single host protist cell.</title>
        <authorList>
            <person name="Hongoh Y."/>
            <person name="Sharma V.K."/>
            <person name="Prakash T."/>
            <person name="Noda S."/>
            <person name="Taylor T.D."/>
            <person name="Kudo T."/>
            <person name="Sakaki Y."/>
            <person name="Toyoda A."/>
            <person name="Hattori M."/>
            <person name="Ohkuma M."/>
        </authorList>
    </citation>
    <scope>NUCLEOTIDE SEQUENCE [LARGE SCALE GENOMIC DNA]</scope>
</reference>
<evidence type="ECO:0000255" key="1">
    <source>
        <dbReference type="HAMAP-Rule" id="MF_00712"/>
    </source>
</evidence>
<name>GCSPA_ENDTX</name>
<accession>B1GYV7</accession>
<feature type="chain" id="PRO_1000147994" description="Probable glycine dehydrogenase (decarboxylating) subunit 1">
    <location>
        <begin position="1"/>
        <end position="443"/>
    </location>
</feature>
<protein>
    <recommendedName>
        <fullName evidence="1">Probable glycine dehydrogenase (decarboxylating) subunit 1</fullName>
        <ecNumber evidence="1">1.4.4.2</ecNumber>
    </recommendedName>
    <alternativeName>
        <fullName evidence="1">Glycine cleavage system P-protein subunit 1</fullName>
    </alternativeName>
    <alternativeName>
        <fullName evidence="1">Glycine decarboxylase subunit 1</fullName>
    </alternativeName>
    <alternativeName>
        <fullName evidence="1">Glycine dehydrogenase (aminomethyl-transferring) subunit 1</fullName>
    </alternativeName>
</protein>
<gene>
    <name evidence="1" type="primary">gcvPA</name>
    <name type="ordered locus">TGRD_717</name>
</gene>
<dbReference type="EC" id="1.4.4.2" evidence="1"/>
<dbReference type="EMBL" id="AP009510">
    <property type="protein sequence ID" value="BAG14200.1"/>
    <property type="molecule type" value="Genomic_DNA"/>
</dbReference>
<dbReference type="RefSeq" id="WP_015423721.1">
    <property type="nucleotide sequence ID" value="NC_020419.1"/>
</dbReference>
<dbReference type="SMR" id="B1GYV7"/>
<dbReference type="STRING" id="471821.TGRD_717"/>
<dbReference type="KEGG" id="rsd:TGRD_717"/>
<dbReference type="PATRIC" id="fig|471821.5.peg.1223"/>
<dbReference type="HOGENOM" id="CLU_004620_0_2_0"/>
<dbReference type="Proteomes" id="UP000001691">
    <property type="component" value="Chromosome"/>
</dbReference>
<dbReference type="GO" id="GO:0004375">
    <property type="term" value="F:glycine dehydrogenase (decarboxylating) activity"/>
    <property type="evidence" value="ECO:0007669"/>
    <property type="project" value="UniProtKB-EC"/>
</dbReference>
<dbReference type="GO" id="GO:0019464">
    <property type="term" value="P:glycine decarboxylation via glycine cleavage system"/>
    <property type="evidence" value="ECO:0007669"/>
    <property type="project" value="UniProtKB-UniRule"/>
</dbReference>
<dbReference type="GO" id="GO:0009116">
    <property type="term" value="P:nucleoside metabolic process"/>
    <property type="evidence" value="ECO:0007669"/>
    <property type="project" value="InterPro"/>
</dbReference>
<dbReference type="CDD" id="cd00613">
    <property type="entry name" value="GDC-P"/>
    <property type="match status" value="1"/>
</dbReference>
<dbReference type="Gene3D" id="3.90.1150.10">
    <property type="entry name" value="Aspartate Aminotransferase, domain 1"/>
    <property type="match status" value="1"/>
</dbReference>
<dbReference type="Gene3D" id="3.40.640.10">
    <property type="entry name" value="Type I PLP-dependent aspartate aminotransferase-like (Major domain)"/>
    <property type="match status" value="1"/>
</dbReference>
<dbReference type="HAMAP" id="MF_00712">
    <property type="entry name" value="GcvPA"/>
    <property type="match status" value="1"/>
</dbReference>
<dbReference type="InterPro" id="IPR023010">
    <property type="entry name" value="GcvPA"/>
</dbReference>
<dbReference type="InterPro" id="IPR049315">
    <property type="entry name" value="GDC-P_N"/>
</dbReference>
<dbReference type="InterPro" id="IPR020581">
    <property type="entry name" value="GDC_P"/>
</dbReference>
<dbReference type="InterPro" id="IPR015424">
    <property type="entry name" value="PyrdxlP-dep_Trfase"/>
</dbReference>
<dbReference type="InterPro" id="IPR015421">
    <property type="entry name" value="PyrdxlP-dep_Trfase_major"/>
</dbReference>
<dbReference type="InterPro" id="IPR015422">
    <property type="entry name" value="PyrdxlP-dep_Trfase_small"/>
</dbReference>
<dbReference type="NCBIfam" id="NF001696">
    <property type="entry name" value="PRK00451.1"/>
    <property type="match status" value="1"/>
</dbReference>
<dbReference type="PANTHER" id="PTHR42806">
    <property type="entry name" value="GLYCINE CLEAVAGE SYSTEM P-PROTEIN"/>
    <property type="match status" value="1"/>
</dbReference>
<dbReference type="PANTHER" id="PTHR42806:SF1">
    <property type="entry name" value="GLYCINE DEHYDROGENASE (DECARBOXYLATING)"/>
    <property type="match status" value="1"/>
</dbReference>
<dbReference type="Pfam" id="PF02347">
    <property type="entry name" value="GDC-P"/>
    <property type="match status" value="1"/>
</dbReference>
<dbReference type="PIRSF" id="PIRSF006815">
    <property type="entry name" value="GcvPA"/>
    <property type="match status" value="1"/>
</dbReference>
<dbReference type="SUPFAM" id="SSF53383">
    <property type="entry name" value="PLP-dependent transferases"/>
    <property type="match status" value="1"/>
</dbReference>
<sequence length="443" mass="48595">MDYTPQNQKDKKKMLETIGIDDVSELFDTIPKDLRAKKLNISGGKTEQELLNYFSDIASENKVLISFRGAGIYDHYIPSLVGEVIGRSEFWTAYTPYQAEASQGTLQSIFEYQSLICALTGLDTSNASLYDGATATAEAVLLALRASGKNKILISQGLHPEYMQTVKTYLENSKAEIVTLNISENGVIEKDAVDASVDDDTAAVIIQSPNFFGVVEDMQALSTVIKSRNSLFVAVLNPLSLGVFMSPGEYKADIAVGEGQVLGSAMRAGGATFGFMAVKKALEWKMPGRIAGQTTDKNGNRGFVLTLQSREQHIRREKATSNICTSASLNALAGCVFLSGWGNDGFKNLAEINISKARYAFNKIKSLKGFKSKFENKVFFNEFVIETSKNIKKIQNILLKNGILGPLDLSCINENFKNCLLFCVTEQRTKAEINRLTEILAEA</sequence>
<keyword id="KW-0560">Oxidoreductase</keyword>
<organism>
    <name type="scientific">Endomicrobium trichonymphae</name>
    <dbReference type="NCBI Taxonomy" id="1408204"/>
    <lineage>
        <taxon>Bacteria</taxon>
        <taxon>Pseudomonadati</taxon>
        <taxon>Elusimicrobiota</taxon>
        <taxon>Endomicrobiia</taxon>
        <taxon>Endomicrobiales</taxon>
        <taxon>Endomicrobiaceae</taxon>
        <taxon>Candidatus Endomicrobiellum</taxon>
    </lineage>
</organism>
<comment type="function">
    <text evidence="1">The glycine cleavage system catalyzes the degradation of glycine. The P protein binds the alpha-amino group of glycine through its pyridoxal phosphate cofactor; CO(2) is released and the remaining methylamine moiety is then transferred to the lipoamide cofactor of the H protein.</text>
</comment>
<comment type="catalytic activity">
    <reaction evidence="1">
        <text>N(6)-[(R)-lipoyl]-L-lysyl-[glycine-cleavage complex H protein] + glycine + H(+) = N(6)-[(R)-S(8)-aminomethyldihydrolipoyl]-L-lysyl-[glycine-cleavage complex H protein] + CO2</text>
        <dbReference type="Rhea" id="RHEA:24304"/>
        <dbReference type="Rhea" id="RHEA-COMP:10494"/>
        <dbReference type="Rhea" id="RHEA-COMP:10495"/>
        <dbReference type="ChEBI" id="CHEBI:15378"/>
        <dbReference type="ChEBI" id="CHEBI:16526"/>
        <dbReference type="ChEBI" id="CHEBI:57305"/>
        <dbReference type="ChEBI" id="CHEBI:83099"/>
        <dbReference type="ChEBI" id="CHEBI:83143"/>
        <dbReference type="EC" id="1.4.4.2"/>
    </reaction>
</comment>
<comment type="subunit">
    <text evidence="1">The glycine cleavage system is composed of four proteins: P, T, L and H. In this organism, the P 'protein' is a heterodimer of two subunits.</text>
</comment>
<comment type="similarity">
    <text evidence="1">Belongs to the GcvP family. N-terminal subunit subfamily.</text>
</comment>
<proteinExistence type="inferred from homology"/>